<feature type="chain" id="PRO_0000201203" description="Acyl-coenzyme A dehydrogenase">
    <location>
        <begin position="1"/>
        <end position="814"/>
    </location>
</feature>
<feature type="active site" description="Proton acceptor" evidence="1">
    <location>
        <position position="497"/>
    </location>
</feature>
<name>FADE_SALTY</name>
<protein>
    <recommendedName>
        <fullName evidence="3">Acyl-coenzyme A dehydrogenase</fullName>
        <shortName evidence="3">ACDH</shortName>
        <shortName evidence="3">Acyl-CoA dehydrogenase</shortName>
        <ecNumber evidence="5">1.3.8.7</ecNumber>
        <ecNumber evidence="5">1.3.8.8</ecNumber>
    </recommendedName>
    <alternativeName>
        <fullName evidence="3">Medium-/long-chain fatty acyl-CoA dehydrogenase</fullName>
    </alternativeName>
</protein>
<accession>Q8ZRJ7</accession>
<proteinExistence type="evidence at transcript level"/>
<evidence type="ECO:0000250" key="1">
    <source>
        <dbReference type="UniProtKB" id="P15651"/>
    </source>
</evidence>
<evidence type="ECO:0000269" key="2">
    <source>
    </source>
</evidence>
<evidence type="ECO:0000303" key="3">
    <source>
    </source>
</evidence>
<evidence type="ECO:0000305" key="4"/>
<evidence type="ECO:0000305" key="5">
    <source>
    </source>
</evidence>
<sequence>MMILSIIATVVLLGALFYHRVSLFLSSLILLAWTAALGVAGLWSIWLLVPLAIILVPFNLTPMRKSMISAPVFRGFRKVMPPMSRTEKEAIDAGTTWWEGDLFQGKPDWKKLHNYPQPQLTAEEQAFLDGPVEEACRMANDFQITHELADLPPELWAYLKEHRFFAMIIKKEYGGLEFSAYAQSRVLQKLSGVSGILAITVGVPNSLGPGELLQHYGTEEQKNHYLPRLARGQEIPCFALTSPEAGSDAGAIPDTGVVCMGEWQGQQVLGMRLTWNKRYITLAPIATVLGLAFKLSDPDRLLGGEEELGITCALIPTSTPGVEIGRRHFPLNVPFQNGPTRGNDIFVPIDYIIGGPKMAGQGWRMLVECLSVGRGITLPSNSTGGVKSVALATGAYAHIRRQFKISIGKMEGIEEPLARIAGNAYVMDAAASLITYGIMLGEKPAVLSAIVKYHCTHRGQQSIIDAMDITGGKGIMLGESNFLARAYQGAPIAITVEGANILTRSMMIFGQGAIRCHPYVLEEMAAAQNNDVNAFDKLLFKHIGHVGSNTVRSFWLGLTRGLTSHTPTGDATKRYYQHLNRLSANLALLSDVSMAVLGGSLKRRERISARLGDVLSQLYLASAVLKRYDDEGRHEADLPLVHWGVQDALYRAEQAMDDLLQNFPNRVVAGLLTAMIFPTGRHYLAPSDKLDHAVAKILQVPNATRSRIGRGQYLTPAEHNPVGLLEEALRDVIAADPIHQRICKELGKNLPFTRLDELARNALAKGLIDKDEAAILAKAEESRLRSINVDDFEPEALATKPVKLPEKVRKVEAA</sequence>
<reference key="1">
    <citation type="journal article" date="2001" name="Nature">
        <title>Complete genome sequence of Salmonella enterica serovar Typhimurium LT2.</title>
        <authorList>
            <person name="McClelland M."/>
            <person name="Sanderson K.E."/>
            <person name="Spieth J."/>
            <person name="Clifton S.W."/>
            <person name="Latreille P."/>
            <person name="Courtney L."/>
            <person name="Porwollik S."/>
            <person name="Ali J."/>
            <person name="Dante M."/>
            <person name="Du F."/>
            <person name="Hou S."/>
            <person name="Layman D."/>
            <person name="Leonard S."/>
            <person name="Nguyen C."/>
            <person name="Scott K."/>
            <person name="Holmes A."/>
            <person name="Grewal N."/>
            <person name="Mulvaney E."/>
            <person name="Ryan E."/>
            <person name="Sun H."/>
            <person name="Florea L."/>
            <person name="Miller W."/>
            <person name="Stoneking T."/>
            <person name="Nhan M."/>
            <person name="Waterston R."/>
            <person name="Wilson R.K."/>
        </authorList>
    </citation>
    <scope>NUCLEOTIDE SEQUENCE [LARGE SCALE GENOMIC DNA]</scope>
    <source>
        <strain>LT2 / SGSC1412 / ATCC 700720</strain>
    </source>
</reference>
<reference key="2">
    <citation type="journal article" date="1999" name="Microbiology">
        <title>The medium-/long-chain fatty acyl-CoA dehydrogenase (fadF) gene of Salmonella typhimurium is a phase 1 starvation-stress response (SSR) locus.</title>
        <authorList>
            <person name="Spector M.P."/>
            <person name="DiRusso C.C."/>
            <person name="Pallen M.J."/>
            <person name="Garcia del Portillo F."/>
            <person name="Dougan G."/>
            <person name="Finlay B.B."/>
        </authorList>
    </citation>
    <scope>IDENTIFICATION</scope>
    <scope>FUNCTION</scope>
    <scope>PATHWAY</scope>
    <scope>INDUCTION</scope>
    <scope>DISRUPTION PHENOTYPE</scope>
    <source>
        <strain>LT2</strain>
    </source>
</reference>
<gene>
    <name type="primary">fadE</name>
    <name evidence="3" type="synonym">fadF</name>
    <name evidence="3" type="synonym">yafH</name>
    <name type="ordered locus">STM0309</name>
</gene>
<dbReference type="EC" id="1.3.8.7" evidence="5"/>
<dbReference type="EC" id="1.3.8.8" evidence="5"/>
<dbReference type="EMBL" id="AE006468">
    <property type="protein sequence ID" value="AAL19266.1"/>
    <property type="molecule type" value="Genomic_DNA"/>
</dbReference>
<dbReference type="RefSeq" id="NP_459307.1">
    <property type="nucleotide sequence ID" value="NC_003197.2"/>
</dbReference>
<dbReference type="RefSeq" id="WP_000973041.1">
    <property type="nucleotide sequence ID" value="NC_003197.2"/>
</dbReference>
<dbReference type="SMR" id="Q8ZRJ7"/>
<dbReference type="STRING" id="99287.STM0309"/>
<dbReference type="PaxDb" id="99287-STM0309"/>
<dbReference type="GeneID" id="1251828"/>
<dbReference type="KEGG" id="stm:STM0309"/>
<dbReference type="PATRIC" id="fig|99287.12.peg.328"/>
<dbReference type="HOGENOM" id="CLU_012192_0_0_6"/>
<dbReference type="OMA" id="CDLANDW"/>
<dbReference type="PhylomeDB" id="Q8ZRJ7"/>
<dbReference type="BioCyc" id="SENT99287:STM0309-MONOMER"/>
<dbReference type="UniPathway" id="UPA00659"/>
<dbReference type="Proteomes" id="UP000001014">
    <property type="component" value="Chromosome"/>
</dbReference>
<dbReference type="GO" id="GO:0005737">
    <property type="term" value="C:cytoplasm"/>
    <property type="evidence" value="ECO:0000318"/>
    <property type="project" value="GO_Central"/>
</dbReference>
<dbReference type="GO" id="GO:0003995">
    <property type="term" value="F:acyl-CoA dehydrogenase activity"/>
    <property type="evidence" value="ECO:0000318"/>
    <property type="project" value="GO_Central"/>
</dbReference>
<dbReference type="GO" id="GO:0050660">
    <property type="term" value="F:flavin adenine dinucleotide binding"/>
    <property type="evidence" value="ECO:0007669"/>
    <property type="project" value="InterPro"/>
</dbReference>
<dbReference type="GO" id="GO:0004466">
    <property type="term" value="F:long-chain fatty acyl-CoA dehydrogenase activity"/>
    <property type="evidence" value="ECO:0007669"/>
    <property type="project" value="UniProtKB-EC"/>
</dbReference>
<dbReference type="GO" id="GO:0070991">
    <property type="term" value="F:medium-chain fatty acyl-CoA dehydrogenase activity"/>
    <property type="evidence" value="ECO:0007669"/>
    <property type="project" value="UniProtKB-EC"/>
</dbReference>
<dbReference type="GO" id="GO:0033539">
    <property type="term" value="P:fatty acid beta-oxidation using acyl-CoA dehydrogenase"/>
    <property type="evidence" value="ECO:0000318"/>
    <property type="project" value="GO_Central"/>
</dbReference>
<dbReference type="FunFam" id="1.10.540.10:FF:000004">
    <property type="entry name" value="Acyl-CoA dehydrogenase"/>
    <property type="match status" value="1"/>
</dbReference>
<dbReference type="FunFam" id="1.20.140.10:FF:000009">
    <property type="entry name" value="Acyl-CoA dehydrogenase"/>
    <property type="match status" value="1"/>
</dbReference>
<dbReference type="FunFam" id="2.40.110.10:FF:000010">
    <property type="entry name" value="Acyl-CoA dehydrogenase"/>
    <property type="match status" value="1"/>
</dbReference>
<dbReference type="Gene3D" id="1.10.540.10">
    <property type="entry name" value="Acyl-CoA dehydrogenase/oxidase, N-terminal domain"/>
    <property type="match status" value="1"/>
</dbReference>
<dbReference type="Gene3D" id="2.40.110.10">
    <property type="entry name" value="Butyryl-CoA Dehydrogenase, subunit A, domain 2"/>
    <property type="match status" value="1"/>
</dbReference>
<dbReference type="Gene3D" id="1.20.140.10">
    <property type="entry name" value="Butyryl-CoA Dehydrogenase, subunit A, domain 3"/>
    <property type="match status" value="1"/>
</dbReference>
<dbReference type="InterPro" id="IPR050741">
    <property type="entry name" value="Acyl-CoA_dehydrogenase"/>
</dbReference>
<dbReference type="InterPro" id="IPR006091">
    <property type="entry name" value="Acyl-CoA_Oxase/DH_mid-dom"/>
</dbReference>
<dbReference type="InterPro" id="IPR046373">
    <property type="entry name" value="Acyl-CoA_Oxase/DH_mid-dom_sf"/>
</dbReference>
<dbReference type="InterPro" id="IPR036250">
    <property type="entry name" value="AcylCo_DH-like_C"/>
</dbReference>
<dbReference type="InterPro" id="IPR009075">
    <property type="entry name" value="AcylCo_DH/oxidase_C"/>
</dbReference>
<dbReference type="InterPro" id="IPR013786">
    <property type="entry name" value="AcylCoA_DH/ox_N"/>
</dbReference>
<dbReference type="InterPro" id="IPR037069">
    <property type="entry name" value="AcylCoA_DH/ox_N_sf"/>
</dbReference>
<dbReference type="InterPro" id="IPR009100">
    <property type="entry name" value="AcylCoA_DH/oxidase_NM_dom_sf"/>
</dbReference>
<dbReference type="InterPro" id="IPR047634">
    <property type="entry name" value="FadE"/>
</dbReference>
<dbReference type="InterPro" id="IPR015396">
    <property type="entry name" value="FadE_C"/>
</dbReference>
<dbReference type="NCBIfam" id="NF038187">
    <property type="entry name" value="FadE_coli"/>
    <property type="match status" value="1"/>
</dbReference>
<dbReference type="NCBIfam" id="NF007000">
    <property type="entry name" value="PRK09463.1"/>
    <property type="match status" value="1"/>
</dbReference>
<dbReference type="NCBIfam" id="NF009586">
    <property type="entry name" value="PRK13026.1"/>
    <property type="match status" value="1"/>
</dbReference>
<dbReference type="PANTHER" id="PTHR48083:SF18">
    <property type="entry name" value="ACYL-COENZYME A DEHYDROGENASE"/>
    <property type="match status" value="1"/>
</dbReference>
<dbReference type="PANTHER" id="PTHR48083">
    <property type="entry name" value="MEDIUM-CHAIN SPECIFIC ACYL-COA DEHYDROGENASE, MITOCHONDRIAL-RELATED"/>
    <property type="match status" value="1"/>
</dbReference>
<dbReference type="Pfam" id="PF09317">
    <property type="entry name" value="ACDH_C"/>
    <property type="match status" value="1"/>
</dbReference>
<dbReference type="Pfam" id="PF00441">
    <property type="entry name" value="Acyl-CoA_dh_1"/>
    <property type="match status" value="1"/>
</dbReference>
<dbReference type="Pfam" id="PF02770">
    <property type="entry name" value="Acyl-CoA_dh_M"/>
    <property type="match status" value="1"/>
</dbReference>
<dbReference type="Pfam" id="PF02771">
    <property type="entry name" value="Acyl-CoA_dh_N"/>
    <property type="match status" value="1"/>
</dbReference>
<dbReference type="SUPFAM" id="SSF47203">
    <property type="entry name" value="Acyl-CoA dehydrogenase C-terminal domain-like"/>
    <property type="match status" value="1"/>
</dbReference>
<dbReference type="SUPFAM" id="SSF56645">
    <property type="entry name" value="Acyl-CoA dehydrogenase NM domain-like"/>
    <property type="match status" value="1"/>
</dbReference>
<keyword id="KW-0274">FAD</keyword>
<keyword id="KW-0276">Fatty acid metabolism</keyword>
<keyword id="KW-0285">Flavoprotein</keyword>
<keyword id="KW-0443">Lipid metabolism</keyword>
<keyword id="KW-0560">Oxidoreductase</keyword>
<keyword id="KW-1185">Reference proteome</keyword>
<comment type="function">
    <text evidence="2">Catalyzes the dehydrogenation of acyl-coenzymes A (acyl-CoAs) to 2-enoyl-CoAs, the first step of the beta-oxidation cycle of fatty acid degradation. Is required for S.typhimurium to utilize medium- and long-chain fatty acids as sole carbon sources for growth. Is needed for bacterial survival during carbone-source starvation.</text>
</comment>
<comment type="catalytic activity">
    <reaction evidence="5">
        <text>a medium-chain 2,3-saturated fatty acyl-CoA + oxidized [electron-transfer flavoprotein] + H(+) = a medium-chain (2E)-enoyl-CoA + reduced [electron-transfer flavoprotein]</text>
        <dbReference type="Rhea" id="RHEA:14477"/>
        <dbReference type="Rhea" id="RHEA-COMP:10685"/>
        <dbReference type="Rhea" id="RHEA-COMP:10686"/>
        <dbReference type="ChEBI" id="CHEBI:15378"/>
        <dbReference type="ChEBI" id="CHEBI:57692"/>
        <dbReference type="ChEBI" id="CHEBI:58307"/>
        <dbReference type="ChEBI" id="CHEBI:83723"/>
        <dbReference type="ChEBI" id="CHEBI:83726"/>
        <dbReference type="EC" id="1.3.8.7"/>
    </reaction>
</comment>
<comment type="catalytic activity">
    <reaction evidence="5">
        <text>a long-chain 2,3-saturated fatty acyl-CoA + oxidized [electron-transfer flavoprotein] + H(+) = a long-chain (2E)-enoyl-CoA + reduced [electron-transfer flavoprotein]</text>
        <dbReference type="Rhea" id="RHEA:17721"/>
        <dbReference type="Rhea" id="RHEA-COMP:10685"/>
        <dbReference type="Rhea" id="RHEA-COMP:10686"/>
        <dbReference type="ChEBI" id="CHEBI:15378"/>
        <dbReference type="ChEBI" id="CHEBI:57692"/>
        <dbReference type="ChEBI" id="CHEBI:58307"/>
        <dbReference type="ChEBI" id="CHEBI:83721"/>
        <dbReference type="ChEBI" id="CHEBI:83727"/>
        <dbReference type="EC" id="1.3.8.8"/>
    </reaction>
</comment>
<comment type="cofactor">
    <cofactor evidence="1">
        <name>FAD</name>
        <dbReference type="ChEBI" id="CHEBI:57692"/>
    </cofactor>
</comment>
<comment type="pathway">
    <text evidence="2">Lipid metabolism; fatty acid beta-oxidation.</text>
</comment>
<comment type="induction">
    <text evidence="2">Is under the negative control of the global regulator FadR and the positive control of the cAMP:cAMP receptor protein (cAMP:CRP) as well as the alarmone ppGpp. Is induced under carbon-source starvation and in the presence of the long-chain fatty acid oleate. Induction during carbon starvation is cAMP:CRP-dependent and sigma(S)-independent.</text>
</comment>
<comment type="disruption phenotype">
    <text evidence="2">Cells lacking this gene show undetectable in vivo beta-oxidation levels, and are unable to grow on oleate or decanoate as a sole carbon and energy source, in contrast to the wild-type parent strain.</text>
</comment>
<comment type="similarity">
    <text evidence="4">Belongs to the acyl-CoA dehydrogenase family.</text>
</comment>
<organism>
    <name type="scientific">Salmonella typhimurium (strain LT2 / SGSC1412 / ATCC 700720)</name>
    <dbReference type="NCBI Taxonomy" id="99287"/>
    <lineage>
        <taxon>Bacteria</taxon>
        <taxon>Pseudomonadati</taxon>
        <taxon>Pseudomonadota</taxon>
        <taxon>Gammaproteobacteria</taxon>
        <taxon>Enterobacterales</taxon>
        <taxon>Enterobacteriaceae</taxon>
        <taxon>Salmonella</taxon>
    </lineage>
</organism>